<feature type="chain" id="PRO_0000030318" description="Nuclear factor NF-kappa-B p110 subunit" evidence="9">
    <location>
        <begin position="1"/>
        <end position="971"/>
    </location>
</feature>
<feature type="chain" id="PRO_0000030319" description="Nuclear factor NF-kappa-B p68 subunit" evidence="9">
    <location>
        <begin position="1"/>
        <end position="545"/>
    </location>
</feature>
<feature type="chain" id="PRO_0000030320" description="Nuclear factor NF-kappa-B p49 subunit" evidence="9">
    <location>
        <begin position="546"/>
        <end position="971"/>
    </location>
</feature>
<feature type="domain" description="RHD" evidence="3">
    <location>
        <begin position="147"/>
        <end position="339"/>
    </location>
</feature>
<feature type="repeat" description="ANK 1" evidence="27">
    <location>
        <begin position="640"/>
        <end position="669"/>
    </location>
</feature>
<feature type="repeat" description="ANK 2" evidence="27">
    <location>
        <begin position="673"/>
        <end position="702"/>
    </location>
</feature>
<feature type="repeat" description="ANK 3" evidence="27">
    <location>
        <begin position="710"/>
        <end position="740"/>
    </location>
</feature>
<feature type="repeat" description="ANK 4" evidence="27">
    <location>
        <begin position="745"/>
        <end position="775"/>
    </location>
</feature>
<feature type="repeat" description="ANK 5" evidence="27">
    <location>
        <begin position="783"/>
        <end position="812"/>
    </location>
</feature>
<feature type="region of interest" description="Disordered" evidence="4">
    <location>
        <begin position="23"/>
        <end position="46"/>
    </location>
</feature>
<feature type="region of interest" description="Disordered" evidence="4">
    <location>
        <begin position="453"/>
        <end position="496"/>
    </location>
</feature>
<feature type="region of interest" description="Disordered" evidence="4">
    <location>
        <begin position="826"/>
        <end position="877"/>
    </location>
</feature>
<feature type="short sequence motif" description="Nuclear localization signal" evidence="2">
    <location>
        <begin position="452"/>
        <end position="457"/>
    </location>
</feature>
<feature type="compositionally biased region" description="Low complexity" evidence="4">
    <location>
        <begin position="23"/>
        <end position="41"/>
    </location>
</feature>
<feature type="compositionally biased region" description="Low complexity" evidence="4">
    <location>
        <begin position="460"/>
        <end position="475"/>
    </location>
</feature>
<feature type="compositionally biased region" description="Basic and acidic residues" evidence="4">
    <location>
        <begin position="866"/>
        <end position="877"/>
    </location>
</feature>
<feature type="site" description="Cleavage (when cotranslationally processed)" evidence="9">
    <location>
        <begin position="545"/>
        <end position="546"/>
    </location>
</feature>
<feature type="modified residue" description="Phosphoserine; by PKA" evidence="2">
    <location>
        <position position="431"/>
    </location>
</feature>
<feature type="modified residue" description="Phosphothreonine" evidence="14">
    <location>
        <position position="620"/>
    </location>
</feature>
<feature type="modified residue" description="Phosphotyrosine" evidence="14">
    <location>
        <position position="626"/>
    </location>
</feature>
<feature type="modified residue" description="Phosphoserine" evidence="1">
    <location>
        <position position="950"/>
    </location>
</feature>
<feature type="splice variant" id="VSP_050089" description="In isoform Maternal." evidence="26">
    <location>
        <begin position="1"/>
        <end position="112"/>
    </location>
</feature>
<feature type="sequence variant" description="In strain: Zim2." evidence="7">
    <original>N</original>
    <variation>S</variation>
    <location>
        <position position="82"/>
    </location>
</feature>
<feature type="sequence variant" description="In strain: Zim3." evidence="7">
    <original>F</original>
    <variation>L</variation>
    <location>
        <position position="110"/>
    </location>
</feature>
<feature type="sequence variant" description="In strain: Zim8." evidence="7">
    <original>T</original>
    <variation>I</variation>
    <location>
        <position position="699"/>
    </location>
</feature>
<feature type="sequence variant" description="In strain: Zim1." evidence="7">
    <original>E</original>
    <variation>G</variation>
    <location>
        <position position="845"/>
    </location>
</feature>
<feature type="sequence variant" description="In strain: Zim8." evidence="7">
    <original>S</original>
    <variation>N</variation>
    <location>
        <position position="862"/>
    </location>
</feature>
<feature type="mutagenesis site" description="Completely resistant to cleavage." evidence="10">
    <original>D</original>
    <variation>A</variation>
    <location>
        <position position="545"/>
    </location>
</feature>
<feature type="sequence conflict" description="In Ref. 2; AAF07086." evidence="27" ref="2">
    <location>
        <position position="114"/>
    </location>
</feature>
<evidence type="ECO:0000250" key="1">
    <source>
        <dbReference type="UniProtKB" id="P25799"/>
    </source>
</evidence>
<evidence type="ECO:0000255" key="2"/>
<evidence type="ECO:0000255" key="3">
    <source>
        <dbReference type="PROSITE-ProRule" id="PRU00265"/>
    </source>
</evidence>
<evidence type="ECO:0000256" key="4">
    <source>
        <dbReference type="SAM" id="MobiDB-lite"/>
    </source>
</evidence>
<evidence type="ECO:0000269" key="5">
    <source>
    </source>
</evidence>
<evidence type="ECO:0000269" key="6">
    <source>
    </source>
</evidence>
<evidence type="ECO:0000269" key="7">
    <source>
    </source>
</evidence>
<evidence type="ECO:0000269" key="8">
    <source>
    </source>
</evidence>
<evidence type="ECO:0000269" key="9">
    <source>
    </source>
</evidence>
<evidence type="ECO:0000269" key="10">
    <source>
    </source>
</evidence>
<evidence type="ECO:0000269" key="11">
    <source>
    </source>
</evidence>
<evidence type="ECO:0000269" key="12">
    <source>
    </source>
</evidence>
<evidence type="ECO:0000269" key="13">
    <source>
    </source>
</evidence>
<evidence type="ECO:0000269" key="14">
    <source>
    </source>
</evidence>
<evidence type="ECO:0000269" key="15">
    <source>
    </source>
</evidence>
<evidence type="ECO:0000269" key="16">
    <source>
    </source>
</evidence>
<evidence type="ECO:0000269" key="17">
    <source>
    </source>
</evidence>
<evidence type="ECO:0000269" key="18">
    <source>
    </source>
</evidence>
<evidence type="ECO:0000269" key="19">
    <source>
    </source>
</evidence>
<evidence type="ECO:0000269" key="20">
    <source>
    </source>
</evidence>
<evidence type="ECO:0000269" key="21">
    <source>
    </source>
</evidence>
<evidence type="ECO:0000269" key="22">
    <source>
    </source>
</evidence>
<evidence type="ECO:0000269" key="23">
    <source>
    </source>
</evidence>
<evidence type="ECO:0000269" key="24">
    <source>
    </source>
</evidence>
<evidence type="ECO:0000269" key="25">
    <source>
    </source>
</evidence>
<evidence type="ECO:0000303" key="26">
    <source>
    </source>
</evidence>
<evidence type="ECO:0000305" key="27"/>
<evidence type="ECO:0000312" key="28">
    <source>
        <dbReference type="EMBL" id="AAL13493.1"/>
    </source>
</evidence>
<evidence type="ECO:0000312" key="29">
    <source>
        <dbReference type="FlyBase" id="FBgn0014018"/>
    </source>
</evidence>
<name>NFKB1_DROME</name>
<gene>
    <name evidence="29" type="primary">Rel</name>
    <name evidence="29" type="ORF">CG11992</name>
</gene>
<reference evidence="27" key="1">
    <citation type="journal article" date="1996" name="Proc. Natl. Acad. Sci. U.S.A.">
        <title>Origins of immunity: Relish, a compound Rel-like gene in the antibacterial defense of Drosophila.</title>
        <authorList>
            <person name="Dushay M.S."/>
            <person name="Asling B."/>
            <person name="Hultmark D."/>
        </authorList>
    </citation>
    <scope>NUCLEOTIDE SEQUENCE [MRNA] (ISOFORM MAJOR)</scope>
    <scope>FUNCTION</scope>
    <scope>DEVELOPMENTAL STAGE</scope>
</reference>
<reference evidence="27" key="2">
    <citation type="journal article" date="1999" name="Mol. Cell">
        <title>Relish, a central factor in the control of humoral, but not cellular immunity in Drosophila.</title>
        <authorList>
            <person name="Hedengren M."/>
            <person name="Asling B."/>
            <person name="Dushay M.S."/>
            <person name="Ando I."/>
            <person name="Ekengren S."/>
            <person name="Wihlborg M."/>
            <person name="Hultmark D."/>
        </authorList>
    </citation>
    <scope>NUCLEOTIDE SEQUENCE [GENOMIC DNA] (ISOFORMS MAJOR AND MATERNAL)</scope>
    <scope>FUNCTION</scope>
    <scope>INDUCTION</scope>
</reference>
<reference evidence="27" key="3">
    <citation type="journal article" date="2000" name="Science">
        <title>The genome sequence of Drosophila melanogaster.</title>
        <authorList>
            <person name="Adams M.D."/>
            <person name="Celniker S.E."/>
            <person name="Holt R.A."/>
            <person name="Evans C.A."/>
            <person name="Gocayne J.D."/>
            <person name="Amanatides P.G."/>
            <person name="Scherer S.E."/>
            <person name="Li P.W."/>
            <person name="Hoskins R.A."/>
            <person name="Galle R.F."/>
            <person name="George R.A."/>
            <person name="Lewis S.E."/>
            <person name="Richards S."/>
            <person name="Ashburner M."/>
            <person name="Henderson S.N."/>
            <person name="Sutton G.G."/>
            <person name="Wortman J.R."/>
            <person name="Yandell M.D."/>
            <person name="Zhang Q."/>
            <person name="Chen L.X."/>
            <person name="Brandon R.C."/>
            <person name="Rogers Y.-H.C."/>
            <person name="Blazej R.G."/>
            <person name="Champe M."/>
            <person name="Pfeiffer B.D."/>
            <person name="Wan K.H."/>
            <person name="Doyle C."/>
            <person name="Baxter E.G."/>
            <person name="Helt G."/>
            <person name="Nelson C.R."/>
            <person name="Miklos G.L.G."/>
            <person name="Abril J.F."/>
            <person name="Agbayani A."/>
            <person name="An H.-J."/>
            <person name="Andrews-Pfannkoch C."/>
            <person name="Baldwin D."/>
            <person name="Ballew R.M."/>
            <person name="Basu A."/>
            <person name="Baxendale J."/>
            <person name="Bayraktaroglu L."/>
            <person name="Beasley E.M."/>
            <person name="Beeson K.Y."/>
            <person name="Benos P.V."/>
            <person name="Berman B.P."/>
            <person name="Bhandari D."/>
            <person name="Bolshakov S."/>
            <person name="Borkova D."/>
            <person name="Botchan M.R."/>
            <person name="Bouck J."/>
            <person name="Brokstein P."/>
            <person name="Brottier P."/>
            <person name="Burtis K.C."/>
            <person name="Busam D.A."/>
            <person name="Butler H."/>
            <person name="Cadieu E."/>
            <person name="Center A."/>
            <person name="Chandra I."/>
            <person name="Cherry J.M."/>
            <person name="Cawley S."/>
            <person name="Dahlke C."/>
            <person name="Davenport L.B."/>
            <person name="Davies P."/>
            <person name="de Pablos B."/>
            <person name="Delcher A."/>
            <person name="Deng Z."/>
            <person name="Mays A.D."/>
            <person name="Dew I."/>
            <person name="Dietz S.M."/>
            <person name="Dodson K."/>
            <person name="Doup L.E."/>
            <person name="Downes M."/>
            <person name="Dugan-Rocha S."/>
            <person name="Dunkov B.C."/>
            <person name="Dunn P."/>
            <person name="Durbin K.J."/>
            <person name="Evangelista C.C."/>
            <person name="Ferraz C."/>
            <person name="Ferriera S."/>
            <person name="Fleischmann W."/>
            <person name="Fosler C."/>
            <person name="Gabrielian A.E."/>
            <person name="Garg N.S."/>
            <person name="Gelbart W.M."/>
            <person name="Glasser K."/>
            <person name="Glodek A."/>
            <person name="Gong F."/>
            <person name="Gorrell J.H."/>
            <person name="Gu Z."/>
            <person name="Guan P."/>
            <person name="Harris M."/>
            <person name="Harris N.L."/>
            <person name="Harvey D.A."/>
            <person name="Heiman T.J."/>
            <person name="Hernandez J.R."/>
            <person name="Houck J."/>
            <person name="Hostin D."/>
            <person name="Houston K.A."/>
            <person name="Howland T.J."/>
            <person name="Wei M.-H."/>
            <person name="Ibegwam C."/>
            <person name="Jalali M."/>
            <person name="Kalush F."/>
            <person name="Karpen G.H."/>
            <person name="Ke Z."/>
            <person name="Kennison J.A."/>
            <person name="Ketchum K.A."/>
            <person name="Kimmel B.E."/>
            <person name="Kodira C.D."/>
            <person name="Kraft C.L."/>
            <person name="Kravitz S."/>
            <person name="Kulp D."/>
            <person name="Lai Z."/>
            <person name="Lasko P."/>
            <person name="Lei Y."/>
            <person name="Levitsky A.A."/>
            <person name="Li J.H."/>
            <person name="Li Z."/>
            <person name="Liang Y."/>
            <person name="Lin X."/>
            <person name="Liu X."/>
            <person name="Mattei B."/>
            <person name="McIntosh T.C."/>
            <person name="McLeod M.P."/>
            <person name="McPherson D."/>
            <person name="Merkulov G."/>
            <person name="Milshina N.V."/>
            <person name="Mobarry C."/>
            <person name="Morris J."/>
            <person name="Moshrefi A."/>
            <person name="Mount S.M."/>
            <person name="Moy M."/>
            <person name="Murphy B."/>
            <person name="Murphy L."/>
            <person name="Muzny D.M."/>
            <person name="Nelson D.L."/>
            <person name="Nelson D.R."/>
            <person name="Nelson K.A."/>
            <person name="Nixon K."/>
            <person name="Nusskern D.R."/>
            <person name="Pacleb J.M."/>
            <person name="Palazzolo M."/>
            <person name="Pittman G.S."/>
            <person name="Pan S."/>
            <person name="Pollard J."/>
            <person name="Puri V."/>
            <person name="Reese M.G."/>
            <person name="Reinert K."/>
            <person name="Remington K."/>
            <person name="Saunders R.D.C."/>
            <person name="Scheeler F."/>
            <person name="Shen H."/>
            <person name="Shue B.C."/>
            <person name="Siden-Kiamos I."/>
            <person name="Simpson M."/>
            <person name="Skupski M.P."/>
            <person name="Smith T.J."/>
            <person name="Spier E."/>
            <person name="Spradling A.C."/>
            <person name="Stapleton M."/>
            <person name="Strong R."/>
            <person name="Sun E."/>
            <person name="Svirskas R."/>
            <person name="Tector C."/>
            <person name="Turner R."/>
            <person name="Venter E."/>
            <person name="Wang A.H."/>
            <person name="Wang X."/>
            <person name="Wang Z.-Y."/>
            <person name="Wassarman D.A."/>
            <person name="Weinstock G.M."/>
            <person name="Weissenbach J."/>
            <person name="Williams S.M."/>
            <person name="Woodage T."/>
            <person name="Worley K.C."/>
            <person name="Wu D."/>
            <person name="Yang S."/>
            <person name="Yao Q.A."/>
            <person name="Ye J."/>
            <person name="Yeh R.-F."/>
            <person name="Zaveri J.S."/>
            <person name="Zhan M."/>
            <person name="Zhang G."/>
            <person name="Zhao Q."/>
            <person name="Zheng L."/>
            <person name="Zheng X.H."/>
            <person name="Zhong F.N."/>
            <person name="Zhong W."/>
            <person name="Zhou X."/>
            <person name="Zhu S.C."/>
            <person name="Zhu X."/>
            <person name="Smith H.O."/>
            <person name="Gibbs R.A."/>
            <person name="Myers E.W."/>
            <person name="Rubin G.M."/>
            <person name="Venter J.C."/>
        </authorList>
    </citation>
    <scope>NUCLEOTIDE SEQUENCE [LARGE SCALE GENOMIC DNA]</scope>
    <source>
        <strain evidence="6">Berkeley</strain>
    </source>
</reference>
<reference evidence="27" key="4">
    <citation type="journal article" date="2002" name="Genome Biol.">
        <title>Annotation of the Drosophila melanogaster euchromatic genome: a systematic review.</title>
        <authorList>
            <person name="Misra S."/>
            <person name="Crosby M.A."/>
            <person name="Mungall C.J."/>
            <person name="Matthews B.B."/>
            <person name="Campbell K.S."/>
            <person name="Hradecky P."/>
            <person name="Huang Y."/>
            <person name="Kaminker J.S."/>
            <person name="Millburn G.H."/>
            <person name="Prochnik S.E."/>
            <person name="Smith C.D."/>
            <person name="Tupy J.L."/>
            <person name="Whitfield E.J."/>
            <person name="Bayraktaroglu L."/>
            <person name="Berman B.P."/>
            <person name="Bettencourt B.R."/>
            <person name="Celniker S.E."/>
            <person name="de Grey A.D.N.J."/>
            <person name="Drysdale R.A."/>
            <person name="Harris N.L."/>
            <person name="Richter J."/>
            <person name="Russo S."/>
            <person name="Schroeder A.J."/>
            <person name="Shu S.Q."/>
            <person name="Stapleton M."/>
            <person name="Yamada C."/>
            <person name="Ashburner M."/>
            <person name="Gelbart W.M."/>
            <person name="Rubin G.M."/>
            <person name="Lewis S.E."/>
        </authorList>
    </citation>
    <scope>GENOME REANNOTATION</scope>
    <scope>ALTERNATIVE SPLICING</scope>
    <source>
        <strain>Berkeley</strain>
    </source>
</reference>
<reference evidence="27" key="5">
    <citation type="journal article" date="2002" name="Genome Biol.">
        <title>A Drosophila full-length cDNA resource.</title>
        <authorList>
            <person name="Stapleton M."/>
            <person name="Carlson J.W."/>
            <person name="Brokstein P."/>
            <person name="Yu C."/>
            <person name="Champe M."/>
            <person name="George R.A."/>
            <person name="Guarin H."/>
            <person name="Kronmiller B."/>
            <person name="Pacleb J.M."/>
            <person name="Park S."/>
            <person name="Wan K.H."/>
            <person name="Rubin G.M."/>
            <person name="Celniker S.E."/>
        </authorList>
    </citation>
    <scope>NUCLEOTIDE SEQUENCE [LARGE SCALE MRNA] (ISOFORM MAJOR)</scope>
    <source>
        <strain evidence="12">Berkeley</strain>
        <tissue evidence="12">Head</tissue>
    </source>
</reference>
<reference evidence="27" key="6">
    <citation type="journal article" date="2000" name="Genetics">
        <title>Adaptive evolution of relish, a Drosophila NF-kappaB/IkappaB protein.</title>
        <authorList>
            <person name="Begun D.J."/>
            <person name="Whitley P."/>
        </authorList>
    </citation>
    <scope>NUCLEOTIDE SEQUENCE [GENOMIC DNA] OF 68-880</scope>
    <scope>VARIANTS SER-82; LEU-110; ILE-699; GLY-845 AND ASN-862</scope>
    <source>
        <strain evidence="7">Zim1</strain>
        <strain evidence="7">Zim2</strain>
        <strain evidence="7">Zim3</strain>
        <strain evidence="7">Zim5</strain>
        <strain evidence="7">Zim7</strain>
        <strain evidence="7">Zim8</strain>
    </source>
</reference>
<reference evidence="27" key="7">
    <citation type="journal article" date="2000" name="EMBO Rep.">
        <title>Activation of the Drosophila NF-kappaB factor Relish by rapid endoproteolytic cleavage.</title>
        <authorList>
            <person name="Stoeven S."/>
            <person name="Ando I."/>
            <person name="Kadalayil L."/>
            <person name="Engstrom Y."/>
            <person name="Hultmark D."/>
        </authorList>
    </citation>
    <scope>PROTEIN SEQUENCE OF 546-553</scope>
    <scope>FUNCTION</scope>
    <scope>PROTEOLYTIC CLEAVAGE</scope>
    <scope>SUBCELLULAR LOCATION</scope>
</reference>
<reference evidence="27" key="8">
    <citation type="journal article" date="2000" name="EMBO Rep.">
        <title>The Drosophila caspase Dredd is required to resist Gram-negative bacterial infection.</title>
        <authorList>
            <person name="Leulier F."/>
            <person name="Rodriguez A."/>
            <person name="Khush R.S."/>
            <person name="Abrams J.M."/>
            <person name="Lemaitre B."/>
        </authorList>
    </citation>
    <scope>DEVELOPMENTAL STAGE</scope>
    <scope>INTERACTION WITH DREDD</scope>
    <scope>MUTAGENESIS OF ASP-545</scope>
</reference>
<reference evidence="27" key="9">
    <citation type="journal article" date="2000" name="Genes Dev.">
        <title>A Drosophila IkappaB kinase complex required for Relish cleavage and antibacterial immunity.</title>
        <authorList>
            <person name="Silverman N."/>
            <person name="Zhou R."/>
            <person name="Stoeven S."/>
            <person name="Pandey N."/>
            <person name="Hultmark D."/>
            <person name="Maniatis T."/>
        </authorList>
    </citation>
    <scope>FUNCTION</scope>
    <scope>PHOSPHORYLATION</scope>
</reference>
<reference evidence="27" key="10">
    <citation type="journal article" date="2002" name="Science">
        <title>Requirement for a peptidoglycan recognition protein (PGRP) in Relish activation and antibacterial immune responses in Drosophila.</title>
        <authorList>
            <person name="Choe K.-M."/>
            <person name="Werner T."/>
            <person name="Stoeven S."/>
            <person name="Hultmark D."/>
            <person name="Anderson K.V."/>
        </authorList>
    </citation>
    <scope>FUNCTION</scope>
</reference>
<reference key="11">
    <citation type="journal article" date="2007" name="PLoS ONE">
        <title>NF-kappaB/Rel-mediated regulation of the neural fate in Drosophila.</title>
        <authorList>
            <person name="Ayyar S."/>
            <person name="Pistillo D."/>
            <person name="Calleja M."/>
            <person name="Brookfield A."/>
            <person name="Gittins K."/>
            <person name="Goldstone C."/>
            <person name="Simpson P."/>
        </authorList>
    </citation>
    <scope>FUNCTION</scope>
    <scope>DISRUPTION PHENOTYPE</scope>
</reference>
<reference key="12">
    <citation type="journal article" date="2008" name="J. Proteome Res.">
        <title>Phosphoproteome analysis of Drosophila melanogaster embryos.</title>
        <authorList>
            <person name="Zhai B."/>
            <person name="Villen J."/>
            <person name="Beausoleil S.A."/>
            <person name="Mintseris J."/>
            <person name="Gygi S.P."/>
        </authorList>
    </citation>
    <scope>PHOSPHORYLATION [LARGE SCALE ANALYSIS] AT THR-620 AND TYR-626</scope>
    <scope>IDENTIFICATION BY MASS SPECTROMETRY</scope>
    <source>
        <tissue>Embryo</tissue>
    </source>
</reference>
<reference key="13">
    <citation type="journal article" date="2011" name="PLoS Pathog.">
        <title>Toll-8/Tollo negatively regulates antimicrobial response in the Drosophila respiratory epithelium.</title>
        <authorList>
            <person name="Akhouayri I."/>
            <person name="Turc C."/>
            <person name="Royet J."/>
            <person name="Charroux B."/>
        </authorList>
    </citation>
    <scope>FUNCTION</scope>
    <scope>DISRUPTION PHENOTYPE</scope>
</reference>
<reference key="14">
    <citation type="journal article" date="2014" name="EMBO J.">
        <title>Akirin specifies NF-kappaB selectivity of Drosophila innate immune response via chromatin remodeling.</title>
        <authorList>
            <person name="Bonnay F."/>
            <person name="Nguyen X.H."/>
            <person name="Cohen-Berros E."/>
            <person name="Troxler L."/>
            <person name="Batsche E."/>
            <person name="Camonis J."/>
            <person name="Takeuchi O."/>
            <person name="Reichhart J.M."/>
            <person name="Matt N."/>
        </authorList>
    </citation>
    <scope>INTERACTION WITH AKIRIN</scope>
</reference>
<reference key="15">
    <citation type="journal article" date="2014" name="J. Biol. Chem.">
        <title>The chromatin regulator DMAP1 modulates activity of the nuclear factor B (NF-B) transcription factor Relish in the Drosophila innate immune response.</title>
        <authorList>
            <person name="Goto A."/>
            <person name="Fukuyama H."/>
            <person name="Imler J.L."/>
            <person name="Hoffmann J.A."/>
        </authorList>
    </citation>
    <scope>INTERACTION WITH DMAP1</scope>
</reference>
<reference key="16">
    <citation type="journal article" date="2014" name="Science">
        <title>An ancient defense system eliminates unfit cells from developing tissues during cell competition.</title>
        <authorList>
            <person name="Meyer S.N."/>
            <person name="Amoyel M."/>
            <person name="Bergantinos C."/>
            <person name="de la Cova C."/>
            <person name="Schertel C."/>
            <person name="Basler K."/>
            <person name="Johnston L.A."/>
        </authorList>
    </citation>
    <scope>FUNCTION</scope>
</reference>
<reference key="17">
    <citation type="journal article" date="2018" name="Cell Host Microbe">
        <title>Inflammation-induced, STING-dependent autophagy restricts Zika virus infection in the Drosophila brain.</title>
        <authorList>
            <person name="Liu Y."/>
            <person name="Gordesky-Gold B."/>
            <person name="Leney-Greene M."/>
            <person name="Weinbren N.L."/>
            <person name="Tudor M."/>
            <person name="Cherry S."/>
        </authorList>
    </citation>
    <scope>FUNCTION</scope>
</reference>
<reference key="18">
    <citation type="journal article" date="2018" name="Cell Rep.">
        <title>Analysis of Drosophila STING reveals an evolutionarily conserved antimicrobial function.</title>
        <authorList>
            <person name="Martin M."/>
            <person name="Hiroyasu A."/>
            <person name="Guzman R.M."/>
            <person name="Roberts S.A."/>
            <person name="Goodman A.G."/>
        </authorList>
    </citation>
    <scope>FUNCTION</scope>
</reference>
<reference key="19">
    <citation type="journal article" date="2018" name="Immunity">
        <title>The kinase IKKbeta regulates a STING- and NF-kappaB-dependent antiviral response pathway in Drosophila.</title>
        <authorList>
            <person name="Goto A."/>
            <person name="Okado K."/>
            <person name="Martins N."/>
            <person name="Cai H."/>
            <person name="Barbier V."/>
            <person name="Lamiable O."/>
            <person name="Troxler L."/>
            <person name="Santiago E."/>
            <person name="Kuhn L."/>
            <person name="Paik D."/>
            <person name="Silverman N."/>
            <person name="Holleufer A."/>
            <person name="Hartmann R."/>
            <person name="Liu J."/>
            <person name="Peng T."/>
            <person name="Hoffmann J.A."/>
            <person name="Meignin C."/>
            <person name="Daeffler L."/>
            <person name="Imler J.L."/>
        </authorList>
    </citation>
    <scope>FUNCTION</scope>
</reference>
<reference key="20">
    <citation type="journal article" date="2020" name="Sci. Signal.">
        <title>2'3'-cGAMP triggers a STING- and NF-kappaB-dependent broad antiviral response in Drosophila.</title>
        <authorList>
            <person name="Cai H."/>
            <person name="Holleufer A."/>
            <person name="Simonsen B."/>
            <person name="Schneider J."/>
            <person name="Lemoine A."/>
            <person name="Gad H.H."/>
            <person name="Huang J."/>
            <person name="Huang J."/>
            <person name="Chen D."/>
            <person name="Peng T."/>
            <person name="Marques J.T."/>
            <person name="Hartmann R."/>
            <person name="Martins N.E."/>
            <person name="Imler J.L."/>
        </authorList>
    </citation>
    <scope>FUNCTION</scope>
</reference>
<reference key="21">
    <citation type="journal article" date="2021" name="Nature">
        <title>cGAS-like receptors sense RNA and control 3'2'-cGAMP signaling in Drosophila.</title>
        <authorList>
            <person name="Slavik K.M."/>
            <person name="Morehouse B.R."/>
            <person name="Ragucci A.E."/>
            <person name="Zhou W."/>
            <person name="Ai X."/>
            <person name="Chen Y."/>
            <person name="Li L."/>
            <person name="Wei Z."/>
            <person name="Baehre H."/>
            <person name="Koenig M."/>
            <person name="Seifert R."/>
            <person name="Lee A.S.Y."/>
            <person name="Cai H."/>
            <person name="Imler J.L."/>
            <person name="Kranzusch P.J."/>
        </authorList>
    </citation>
    <scope>FUNCTION</scope>
</reference>
<reference key="22">
    <citation type="journal article" date="2021" name="Nature">
        <title>Two cGAS-like receptors induce antiviral immunity in Drosophila.</title>
        <authorList>
            <person name="Holleufer A."/>
            <person name="Winther K.G."/>
            <person name="Gad H.H."/>
            <person name="Ai X."/>
            <person name="Chen Y."/>
            <person name="Li L."/>
            <person name="Wei Z."/>
            <person name="Deng H."/>
            <person name="Liu J."/>
            <person name="Frederiksen N.A."/>
            <person name="Simonsen B."/>
            <person name="Andersen L.L."/>
            <person name="Kleigrewe K."/>
            <person name="Dalskov L."/>
            <person name="Pichlmair A."/>
            <person name="Cai H."/>
            <person name="Imler J.L."/>
            <person name="Hartmann R."/>
        </authorList>
    </citation>
    <scope>FUNCTION</scope>
</reference>
<organism evidence="28">
    <name type="scientific">Drosophila melanogaster</name>
    <name type="common">Fruit fly</name>
    <dbReference type="NCBI Taxonomy" id="7227"/>
    <lineage>
        <taxon>Eukaryota</taxon>
        <taxon>Metazoa</taxon>
        <taxon>Ecdysozoa</taxon>
        <taxon>Arthropoda</taxon>
        <taxon>Hexapoda</taxon>
        <taxon>Insecta</taxon>
        <taxon>Pterygota</taxon>
        <taxon>Neoptera</taxon>
        <taxon>Endopterygota</taxon>
        <taxon>Diptera</taxon>
        <taxon>Brachycera</taxon>
        <taxon>Muscomorpha</taxon>
        <taxon>Ephydroidea</taxon>
        <taxon>Drosophilidae</taxon>
        <taxon>Drosophila</taxon>
        <taxon>Sophophora</taxon>
    </lineage>
</organism>
<proteinExistence type="evidence at protein level"/>
<accession>Q94527</accession>
<accession>A4V2K3</accession>
<accession>Q9U435</accession>
<accession>Q9U436</accession>
<accession>Q9U437</accession>
<accession>Q9U438</accession>
<accession>Q9U439</accession>
<accession>Q9U440</accession>
<accession>Q9U6H3</accession>
<accession>Q9U6H4</accession>
<accession>Q9U6H5</accession>
<accession>Q9VHI0</accession>
<protein>
    <recommendedName>
        <fullName>Nuclear factor NF-kappa-B p110 subunit</fullName>
    </recommendedName>
    <alternativeName>
        <fullName>Rel-p110</fullName>
    </alternativeName>
    <alternativeName>
        <fullName>Relish protein</fullName>
    </alternativeName>
    <component>
        <recommendedName>
            <fullName>Nuclear factor NF-kappa-B p68 subunit</fullName>
        </recommendedName>
        <alternativeName>
            <fullName>Rel-p68</fullName>
        </alternativeName>
    </component>
    <component>
        <recommendedName>
            <fullName>Nuclear factor NF-kappa-B p49 subunit</fullName>
        </recommendedName>
        <alternativeName>
            <fullName>Rel-p49</fullName>
        </alternativeName>
    </component>
</protein>
<comment type="function">
    <text evidence="5 8 9 11 13 15 18 19 20 21 22 23 24 25">Transcription factor that plays a key role in the humoral immune response as part of the peptidoglycan recognition protein (IMD) signaling pathway (PubMed:10619029, PubMed:11269501, PubMed:11872802, PubMed:22022271, PubMed:29924997, PubMed:8816802). Rel-p68 subunit translocates to the nucleus where it binds to the promoter of the Cecropin A1 gene and probably other antimicrobial peptide genes (PubMed:11269501, PubMed:29924997). I-kappa-B kinase complex (IKKbeta and key) and PGRP-LC are essential signaling components in transmitting the lipopolysaccharide (LPS) signal leading to cact degradation for NF-kappa-B (rel) activation (PubMed:11018014, PubMed:11872802). Part of a Toll-related receptor pathway that functions in the apoptosis of unfit cells during cell competition (PubMed:25477468). Also part of some antiviral immunity: activated downstream of Sting signaling, which detects double-stranded RNA (dsRNA) from viruses, and promotes expression of antiviral effector genes (PubMed:29934091, PubMed:30119996, PubMed:33262294, PubMed:34261127, PubMed:34261128). May be part of a NF-kappa-B and Tollo signaling cascade that regulates development of the peripheral nervous system (PubMed:18000549). Possibly post-transcriptionally regulates the neuron-specific genes sc and ase, by promoting the rapid turnover of their transcripts in the wing imaginal disk (PubMed:18000549).</text>
</comment>
<comment type="subunit">
    <text evidence="10 16 17">Rel-p68 subunit interacts with Dredd (PubMed:11269502). Interacts with DMAP1 (PubMed:24947515). Interacts with akirin; interaction is immune stimulation-dependent; activates selected rel target gene promoters (PubMed:25180232).</text>
</comment>
<comment type="interaction">
    <interactant intactId="EBI-869024">
        <id>Q94527</id>
    </interactant>
    <interactant intactId="EBI-96644">
        <id>Q9VS59</id>
        <label>akirin</label>
    </interactant>
    <organismsDiffer>false</organismsDiffer>
    <experiments>4</experiments>
</comment>
<comment type="interaction">
    <interactant intactId="EBI-869024">
        <id>Q94527</id>
    </interactant>
    <interactant intactId="EBI-164494">
        <id>Q7YU81</id>
        <label>chn</label>
    </interactant>
    <organismsDiffer>false</organismsDiffer>
    <experiments>3</experiments>
</comment>
<comment type="interaction">
    <interactant intactId="EBI-869024">
        <id>Q94527</id>
    </interactant>
    <interactant intactId="EBI-188843">
        <id>P98149</id>
        <label>Dif</label>
    </interactant>
    <organismsDiffer>false</organismsDiffer>
    <experiments>3</experiments>
</comment>
<comment type="interaction">
    <interactant intactId="EBI-869024">
        <id>Q94527</id>
    </interactant>
    <interactant intactId="EBI-497032">
        <id>P13002</id>
        <label>grh</label>
    </interactant>
    <organismsDiffer>false</organismsDiffer>
    <experiments>3</experiments>
</comment>
<comment type="interaction">
    <interactant intactId="EBI-869024">
        <id>Q94527</id>
    </interactant>
    <interactant intactId="EBI-2565022">
        <id>Q9VDZ3</id>
        <label>sqz</label>
    </interactant>
    <organismsDiffer>false</organismsDiffer>
    <experiments>3</experiments>
</comment>
<comment type="interaction">
    <interactant intactId="EBI-15786027">
        <id>Q94527-1</id>
    </interactant>
    <interactant intactId="EBI-188843">
        <id>P98149</id>
        <label>Dif</label>
    </interactant>
    <organismsDiffer>false</organismsDiffer>
    <experiments>2</experiments>
</comment>
<comment type="interaction">
    <interactant intactId="EBI-15786027">
        <id>Q94527-1</id>
    </interactant>
    <interactant intactId="EBI-198375">
        <id>P15330</id>
        <label>dl</label>
    </interactant>
    <organismsDiffer>false</organismsDiffer>
    <experiments>2</experiments>
</comment>
<comment type="interaction">
    <interactant intactId="EBI-15786027">
        <id>Q94527-1</id>
    </interactant>
    <interactant intactId="EBI-148871">
        <id>Q9VEZ5</id>
        <label>IKKbeta</label>
    </interactant>
    <organismsDiffer>false</organismsDiffer>
    <experiments>2</experiments>
</comment>
<comment type="interaction">
    <interactant intactId="EBI-15786027">
        <id>Q94527-1</id>
    </interactant>
    <interactant intactId="EBI-15786027">
        <id>Q94527-1</id>
        <label>Rel</label>
    </interactant>
    <organismsDiffer>false</organismsDiffer>
    <experiments>2</experiments>
</comment>
<comment type="subcellular location">
    <molecule>Nuclear factor NF-kappa-B p68 subunit</molecule>
    <subcellularLocation>
        <location>Nucleus</location>
    </subcellularLocation>
</comment>
<comment type="subcellular location">
    <molecule>Nuclear factor NF-kappa-B p110 subunit</molecule>
    <subcellularLocation>
        <location>Cytoplasm</location>
    </subcellularLocation>
</comment>
<comment type="subcellular location">
    <molecule>Nuclear factor NF-kappa-B p49 subunit</molecule>
    <subcellularLocation>
        <location>Cytoplasm</location>
    </subcellularLocation>
</comment>
<comment type="alternative products">
    <event type="alternative splicing"/>
    <isoform>
        <id>Q94527-1</id>
        <name evidence="5">Major</name>
        <name evidence="5">A</name>
        <name>B</name>
        <name>C</name>
        <name evidence="5">p110</name>
        <sequence type="displayed"/>
    </isoform>
    <isoform>
        <id>Q94527-2</id>
        <name evidence="5">Maternal</name>
        <name evidence="5">D</name>
        <name evidence="5">p100</name>
        <sequence type="described" ref="VSP_050089"/>
    </isoform>
</comment>
<comment type="developmental stage">
    <text evidence="10 25">Expressed both maternally and zygotically.</text>
</comment>
<comment type="induction">
    <text evidence="5">By bacteria and fungi.</text>
</comment>
<comment type="PTM">
    <text evidence="8 9 14">Phosphorylated by lipopolysaccharide (LPS)-activated I-kappa-B kinase complex before being cleaved. Rel-p110 subunit is cleaved within seconds of an immune challenge into Rel-p49 subunit and Rel-p68 subunit. Rel-p110 subunit reappears after 45 minutes.</text>
</comment>
<comment type="disruption phenotype">
    <text>Larvae infected with Gram-negative bacteria fail to activate tracheal expression of the antibacterial peptide gene Drs (PubMed:22022271). Ectopic bristles develop on the dorsocentral, scutellar and lateral regions of the noctum, with one or more ectopic bristles per hemi-notum (PubMed:18000549).</text>
</comment>
<dbReference type="EMBL" id="U62005">
    <property type="protein sequence ID" value="AAB17264.1"/>
    <property type="molecule type" value="mRNA"/>
</dbReference>
<dbReference type="EMBL" id="AF186073">
    <property type="protein sequence ID" value="AAF07931.1"/>
    <property type="molecule type" value="Genomic_DNA"/>
</dbReference>
<dbReference type="EMBL" id="AF186073">
    <property type="protein sequence ID" value="AAF07932.1"/>
    <property type="molecule type" value="Genomic_DNA"/>
</dbReference>
<dbReference type="EMBL" id="AF186077">
    <property type="protein sequence ID" value="AAF07086.1"/>
    <property type="molecule type" value="Genomic_DNA"/>
</dbReference>
<dbReference type="EMBL" id="AF186078">
    <property type="protein sequence ID" value="AAF07087.2"/>
    <property type="molecule type" value="Genomic_DNA"/>
</dbReference>
<dbReference type="EMBL" id="AE014297">
    <property type="protein sequence ID" value="AAF54333.2"/>
    <property type="molecule type" value="Genomic_DNA"/>
</dbReference>
<dbReference type="EMBL" id="AE014297">
    <property type="protein sequence ID" value="AAS65130.1"/>
    <property type="molecule type" value="Genomic_DNA"/>
</dbReference>
<dbReference type="EMBL" id="AE014297">
    <property type="protein sequence ID" value="AAS65131.1"/>
    <property type="molecule type" value="Genomic_DNA"/>
</dbReference>
<dbReference type="EMBL" id="AE014297">
    <property type="protein sequence ID" value="AAS65132.1"/>
    <property type="molecule type" value="Genomic_DNA"/>
</dbReference>
<dbReference type="EMBL" id="AY058264">
    <property type="protein sequence ID" value="AAL13493.1"/>
    <property type="molecule type" value="mRNA"/>
</dbReference>
<dbReference type="EMBL" id="AF204284">
    <property type="protein sequence ID" value="AAF20132.1"/>
    <property type="molecule type" value="Genomic_DNA"/>
</dbReference>
<dbReference type="EMBL" id="AF204285">
    <property type="protein sequence ID" value="AAF20133.1"/>
    <property type="molecule type" value="Genomic_DNA"/>
</dbReference>
<dbReference type="EMBL" id="AF204286">
    <property type="protein sequence ID" value="AAF20134.1"/>
    <property type="molecule type" value="Genomic_DNA"/>
</dbReference>
<dbReference type="EMBL" id="AF204287">
    <property type="protein sequence ID" value="AAF20135.1"/>
    <property type="molecule type" value="Genomic_DNA"/>
</dbReference>
<dbReference type="EMBL" id="AF204288">
    <property type="protein sequence ID" value="AAF20136.1"/>
    <property type="molecule type" value="Genomic_DNA"/>
</dbReference>
<dbReference type="EMBL" id="AF204289">
    <property type="protein sequence ID" value="AAF20137.1"/>
    <property type="molecule type" value="Genomic_DNA"/>
</dbReference>
<dbReference type="RefSeq" id="NP_477094.1">
    <molecule id="Q94527-1"/>
    <property type="nucleotide sequence ID" value="NM_057746.4"/>
</dbReference>
<dbReference type="RefSeq" id="NP_996187.1">
    <molecule id="Q94527-2"/>
    <property type="nucleotide sequence ID" value="NM_206465.1"/>
</dbReference>
<dbReference type="RefSeq" id="NP_996188.1">
    <molecule id="Q94527-1"/>
    <property type="nucleotide sequence ID" value="NM_206466.1"/>
</dbReference>
<dbReference type="RefSeq" id="NP_996189.1">
    <molecule id="Q94527-1"/>
    <property type="nucleotide sequence ID" value="NM_206467.1"/>
</dbReference>
<dbReference type="SMR" id="Q94527"/>
<dbReference type="BioGRID" id="66255">
    <property type="interactions" value="259"/>
</dbReference>
<dbReference type="DIP" id="DIP-60434N"/>
<dbReference type="FunCoup" id="Q94527">
    <property type="interactions" value="715"/>
</dbReference>
<dbReference type="IntAct" id="Q94527">
    <property type="interactions" value="140"/>
</dbReference>
<dbReference type="MINT" id="Q94527"/>
<dbReference type="STRING" id="7227.FBpp0088375"/>
<dbReference type="iPTMnet" id="Q94527"/>
<dbReference type="PaxDb" id="7227-FBpp0088375"/>
<dbReference type="DNASU" id="41087"/>
<dbReference type="EnsemblMetazoa" id="FBtr0089338">
    <molecule id="Q94527-1"/>
    <property type="protein sequence ID" value="FBpp0088375"/>
    <property type="gene ID" value="FBgn0014018"/>
</dbReference>
<dbReference type="EnsemblMetazoa" id="FBtr0089339">
    <molecule id="Q94527-1"/>
    <property type="protein sequence ID" value="FBpp0088973"/>
    <property type="gene ID" value="FBgn0014018"/>
</dbReference>
<dbReference type="EnsemblMetazoa" id="FBtr0089340">
    <molecule id="Q94527-1"/>
    <property type="protein sequence ID" value="FBpp0088971"/>
    <property type="gene ID" value="FBgn0014018"/>
</dbReference>
<dbReference type="EnsemblMetazoa" id="FBtr0089341">
    <molecule id="Q94527-2"/>
    <property type="protein sequence ID" value="FBpp0088972"/>
    <property type="gene ID" value="FBgn0014018"/>
</dbReference>
<dbReference type="GeneID" id="41087"/>
<dbReference type="KEGG" id="dme:Dmel_CG11992"/>
<dbReference type="AGR" id="FB:FBgn0014018"/>
<dbReference type="CTD" id="5966"/>
<dbReference type="FlyBase" id="FBgn0014018">
    <property type="gene designation" value="Rel"/>
</dbReference>
<dbReference type="VEuPathDB" id="VectorBase:FBgn0014018"/>
<dbReference type="eggNOG" id="KOG0504">
    <property type="taxonomic scope" value="Eukaryota"/>
</dbReference>
<dbReference type="GeneTree" id="ENSGT00940000164992"/>
<dbReference type="InParanoid" id="Q94527"/>
<dbReference type="OMA" id="SPNQQNH"/>
<dbReference type="OrthoDB" id="10254686at2759"/>
<dbReference type="PhylomeDB" id="Q94527"/>
<dbReference type="Reactome" id="R-DME-1169091">
    <property type="pathway name" value="Activation of NF-kappaB in B cells"/>
</dbReference>
<dbReference type="Reactome" id="R-DME-1810476">
    <property type="pathway name" value="RIP-mediated NFkB activation via ZBP1"/>
</dbReference>
<dbReference type="Reactome" id="R-DME-202424">
    <property type="pathway name" value="Downstream TCR signaling"/>
</dbReference>
<dbReference type="Reactome" id="R-DME-209394">
    <property type="pathway name" value="Transcriptional activtion and repression of REL-68 target genes"/>
</dbReference>
<dbReference type="Reactome" id="R-DME-209560">
    <property type="pathway name" value="NF-kB is activated and signals survival"/>
</dbReference>
<dbReference type="Reactome" id="R-DME-214399">
    <property type="pathway name" value="Activated IkappaB kinase (IKK) complex, Phospho IRD5:KEY dimer, phosphorylates REL in the PGN:PGRP-LC/LE receptor 'signalling complex'"/>
</dbReference>
<dbReference type="Reactome" id="R-DME-214411">
    <property type="pathway name" value="REL binds to DREDD in the PGN:PGRP-LC/LE receptor 'signalling complex'"/>
</dbReference>
<dbReference type="Reactome" id="R-DME-214416">
    <property type="pathway name" value="Phosphorylated REL is cleaved by and dissociates from DREDD"/>
</dbReference>
<dbReference type="Reactome" id="R-DME-2871837">
    <property type="pathway name" value="FCERI mediated NF-kB activation"/>
</dbReference>
<dbReference type="Reactome" id="R-DME-3134963">
    <property type="pathway name" value="DEx/H-box helicases activate type I IFN and inflammatory cytokines production"/>
</dbReference>
<dbReference type="Reactome" id="R-DME-445989">
    <property type="pathway name" value="TAK1-dependent IKK and NF-kappa-B activation"/>
</dbReference>
<dbReference type="Reactome" id="R-DME-5607761">
    <property type="pathway name" value="Dectin-1 mediated noncanonical NF-kB signaling"/>
</dbReference>
<dbReference type="Reactome" id="R-DME-5607764">
    <property type="pathway name" value="CLEC7A (Dectin-1) signaling"/>
</dbReference>
<dbReference type="Reactome" id="R-DME-5621575">
    <property type="pathway name" value="CD209 (DC-SIGN) signaling"/>
</dbReference>
<dbReference type="Reactome" id="R-DME-5676590">
    <property type="pathway name" value="NIK--&gt;noncanonical NF-kB signaling"/>
</dbReference>
<dbReference type="Reactome" id="R-DME-6798695">
    <property type="pathway name" value="Neutrophil degranulation"/>
</dbReference>
<dbReference type="Reactome" id="R-DME-9020702">
    <property type="pathway name" value="Interleukin-1 signaling"/>
</dbReference>
<dbReference type="Reactome" id="R-DME-933542">
    <property type="pathway name" value="TRAF6 mediated NF-kB activation"/>
</dbReference>
<dbReference type="Reactome" id="R-DME-9860927">
    <property type="pathway name" value="Turbulent (oscillatory, disturbed) flow shear stress activates signaling by PIEZO1 and integrins in endothelial cells"/>
</dbReference>
<dbReference type="SignaLink" id="Q94527"/>
<dbReference type="BioGRID-ORCS" id="41087">
    <property type="hits" value="0 hits in 3 CRISPR screens"/>
</dbReference>
<dbReference type="GenomeRNAi" id="41087"/>
<dbReference type="PRO" id="PR:Q94527"/>
<dbReference type="Proteomes" id="UP000000803">
    <property type="component" value="Chromosome 3R"/>
</dbReference>
<dbReference type="Bgee" id="FBgn0014018">
    <property type="expression patterns" value="Expressed in adult abdominal pericardial cell (Drosophila) in dorsal vessel heart and 173 other cell types or tissues"/>
</dbReference>
<dbReference type="ExpressionAtlas" id="Q94527">
    <property type="expression patterns" value="baseline and differential"/>
</dbReference>
<dbReference type="GO" id="GO:0005737">
    <property type="term" value="C:cytoplasm"/>
    <property type="evidence" value="ECO:0000314"/>
    <property type="project" value="FlyBase"/>
</dbReference>
<dbReference type="GO" id="GO:0005829">
    <property type="term" value="C:cytosol"/>
    <property type="evidence" value="ECO:0000314"/>
    <property type="project" value="FlyBase"/>
</dbReference>
<dbReference type="GO" id="GO:0000791">
    <property type="term" value="C:euchromatin"/>
    <property type="evidence" value="ECO:0000314"/>
    <property type="project" value="FlyBase"/>
</dbReference>
<dbReference type="GO" id="GO:0005654">
    <property type="term" value="C:nucleoplasm"/>
    <property type="evidence" value="ECO:0000304"/>
    <property type="project" value="Reactome"/>
</dbReference>
<dbReference type="GO" id="GO:0005634">
    <property type="term" value="C:nucleus"/>
    <property type="evidence" value="ECO:0000314"/>
    <property type="project" value="FlyBase"/>
</dbReference>
<dbReference type="GO" id="GO:0001228">
    <property type="term" value="F:DNA-binding transcription activator activity, RNA polymerase II-specific"/>
    <property type="evidence" value="ECO:0000314"/>
    <property type="project" value="FlyBase"/>
</dbReference>
<dbReference type="GO" id="GO:0000981">
    <property type="term" value="F:DNA-binding transcription factor activity, RNA polymerase II-specific"/>
    <property type="evidence" value="ECO:0000314"/>
    <property type="project" value="FlyBase"/>
</dbReference>
<dbReference type="GO" id="GO:0042802">
    <property type="term" value="F:identical protein binding"/>
    <property type="evidence" value="ECO:0000353"/>
    <property type="project" value="IntAct"/>
</dbReference>
<dbReference type="GO" id="GO:0106222">
    <property type="term" value="F:lncRNA binding"/>
    <property type="evidence" value="ECO:0000353"/>
    <property type="project" value="FlyBase"/>
</dbReference>
<dbReference type="GO" id="GO:0000978">
    <property type="term" value="F:RNA polymerase II cis-regulatory region sequence-specific DNA binding"/>
    <property type="evidence" value="ECO:0000318"/>
    <property type="project" value="GO_Central"/>
</dbReference>
<dbReference type="GO" id="GO:0000977">
    <property type="term" value="F:RNA polymerase II transcription regulatory region sequence-specific DNA binding"/>
    <property type="evidence" value="ECO:0000314"/>
    <property type="project" value="FlyBase"/>
</dbReference>
<dbReference type="GO" id="GO:0030547">
    <property type="term" value="F:signaling receptor inhibitor activity"/>
    <property type="evidence" value="ECO:0000353"/>
    <property type="project" value="FlyBase"/>
</dbReference>
<dbReference type="GO" id="GO:0140374">
    <property type="term" value="P:antiviral innate immune response"/>
    <property type="evidence" value="ECO:0000315"/>
    <property type="project" value="FlyBase"/>
</dbReference>
<dbReference type="GO" id="GO:0034198">
    <property type="term" value="P:cellular response to amino acid starvation"/>
    <property type="evidence" value="ECO:0000315"/>
    <property type="project" value="FlyBase"/>
</dbReference>
<dbReference type="GO" id="GO:0140896">
    <property type="term" value="P:cGAS/STING signaling pathway"/>
    <property type="evidence" value="ECO:0000315"/>
    <property type="project" value="FlyBase"/>
</dbReference>
<dbReference type="GO" id="GO:0042742">
    <property type="term" value="P:defense response to bacterium"/>
    <property type="evidence" value="ECO:0000315"/>
    <property type="project" value="FlyBase"/>
</dbReference>
<dbReference type="GO" id="GO:0050829">
    <property type="term" value="P:defense response to Gram-negative bacterium"/>
    <property type="evidence" value="ECO:0000314"/>
    <property type="project" value="FlyBase"/>
</dbReference>
<dbReference type="GO" id="GO:0051607">
    <property type="term" value="P:defense response to virus"/>
    <property type="evidence" value="ECO:0000314"/>
    <property type="project" value="UniProt"/>
</dbReference>
<dbReference type="GO" id="GO:0048813">
    <property type="term" value="P:dendrite morphogenesis"/>
    <property type="evidence" value="ECO:0000315"/>
    <property type="project" value="FlyBase"/>
</dbReference>
<dbReference type="GO" id="GO:0006974">
    <property type="term" value="P:DNA damage response"/>
    <property type="evidence" value="ECO:0000315"/>
    <property type="project" value="FlyBase"/>
</dbReference>
<dbReference type="GO" id="GO:0006955">
    <property type="term" value="P:immune response"/>
    <property type="evidence" value="ECO:0000315"/>
    <property type="project" value="FlyBase"/>
</dbReference>
<dbReference type="GO" id="GO:0046426">
    <property type="term" value="P:negative regulation of receptor signaling pathway via JAK-STAT"/>
    <property type="evidence" value="ECO:0000314"/>
    <property type="project" value="FlyBase"/>
</dbReference>
<dbReference type="GO" id="GO:2000647">
    <property type="term" value="P:negative regulation of stem cell proliferation"/>
    <property type="evidence" value="ECO:0000315"/>
    <property type="project" value="FlyBase"/>
</dbReference>
<dbReference type="GO" id="GO:0061057">
    <property type="term" value="P:peptidoglycan recognition protein signaling pathway"/>
    <property type="evidence" value="ECO:0000314"/>
    <property type="project" value="FlyBase"/>
</dbReference>
<dbReference type="GO" id="GO:0048935">
    <property type="term" value="P:peripheral nervous system neuron development"/>
    <property type="evidence" value="ECO:0000315"/>
    <property type="project" value="FlyBase"/>
</dbReference>
<dbReference type="GO" id="GO:0006963">
    <property type="term" value="P:positive regulation of antibacterial peptide biosynthetic process"/>
    <property type="evidence" value="ECO:0000315"/>
    <property type="project" value="FlyBase"/>
</dbReference>
<dbReference type="GO" id="GO:0006967">
    <property type="term" value="P:positive regulation of antifungal peptide biosynthetic process"/>
    <property type="evidence" value="ECO:0000315"/>
    <property type="project" value="FlyBase"/>
</dbReference>
<dbReference type="GO" id="GO:0002225">
    <property type="term" value="P:positive regulation of antimicrobial peptide production"/>
    <property type="evidence" value="ECO:0000315"/>
    <property type="project" value="FlyBase"/>
</dbReference>
<dbReference type="GO" id="GO:0006964">
    <property type="term" value="P:positive regulation of biosynthetic process of antibacterial peptides active against Gram-negative bacteria"/>
    <property type="evidence" value="ECO:0000315"/>
    <property type="project" value="FlyBase"/>
</dbReference>
<dbReference type="GO" id="GO:0002230">
    <property type="term" value="P:positive regulation of defense response to virus by host"/>
    <property type="evidence" value="ECO:0000315"/>
    <property type="project" value="FlyBase"/>
</dbReference>
<dbReference type="GO" id="GO:0010628">
    <property type="term" value="P:positive regulation of gene expression"/>
    <property type="evidence" value="ECO:0000315"/>
    <property type="project" value="FlyBase"/>
</dbReference>
<dbReference type="GO" id="GO:0045089">
    <property type="term" value="P:positive regulation of innate immune response"/>
    <property type="evidence" value="ECO:0000315"/>
    <property type="project" value="FlyBase"/>
</dbReference>
<dbReference type="GO" id="GO:0045429">
    <property type="term" value="P:positive regulation of nitric oxide biosynthetic process"/>
    <property type="evidence" value="ECO:0000315"/>
    <property type="project" value="FlyBase"/>
</dbReference>
<dbReference type="GO" id="GO:0050766">
    <property type="term" value="P:positive regulation of phagocytosis"/>
    <property type="evidence" value="ECO:0000315"/>
    <property type="project" value="FlyBase"/>
</dbReference>
<dbReference type="GO" id="GO:0045944">
    <property type="term" value="P:positive regulation of transcription by RNA polymerase II"/>
    <property type="evidence" value="ECO:0000314"/>
    <property type="project" value="FlyBase"/>
</dbReference>
<dbReference type="GO" id="GO:0045088">
    <property type="term" value="P:regulation of innate immune response"/>
    <property type="evidence" value="ECO:0000315"/>
    <property type="project" value="FlyBase"/>
</dbReference>
<dbReference type="GO" id="GO:0009617">
    <property type="term" value="P:response to bacterium"/>
    <property type="evidence" value="ECO:0000314"/>
    <property type="project" value="FlyBase"/>
</dbReference>
<dbReference type="CDD" id="cd01177">
    <property type="entry name" value="IPT_NFkappaB"/>
    <property type="match status" value="1"/>
</dbReference>
<dbReference type="CDD" id="cd07884">
    <property type="entry name" value="RHD-n_Relish"/>
    <property type="match status" value="1"/>
</dbReference>
<dbReference type="FunFam" id="2.60.40.340:FF:000004">
    <property type="entry name" value="Nuclear factor NF-kappa-B p105 subunit isoform 1"/>
    <property type="match status" value="1"/>
</dbReference>
<dbReference type="FunFam" id="1.25.40.20:FF:000724">
    <property type="entry name" value="Rel"/>
    <property type="match status" value="1"/>
</dbReference>
<dbReference type="Gene3D" id="1.25.40.20">
    <property type="entry name" value="Ankyrin repeat-containing domain"/>
    <property type="match status" value="1"/>
</dbReference>
<dbReference type="Gene3D" id="2.60.40.10">
    <property type="entry name" value="Immunoglobulins"/>
    <property type="match status" value="1"/>
</dbReference>
<dbReference type="Gene3D" id="2.60.40.340">
    <property type="entry name" value="Rel homology domain (RHD), DNA-binding domain"/>
    <property type="match status" value="1"/>
</dbReference>
<dbReference type="InterPro" id="IPR002110">
    <property type="entry name" value="Ankyrin_rpt"/>
</dbReference>
<dbReference type="InterPro" id="IPR036770">
    <property type="entry name" value="Ankyrin_rpt-contain_sf"/>
</dbReference>
<dbReference type="InterPro" id="IPR013783">
    <property type="entry name" value="Ig-like_fold"/>
</dbReference>
<dbReference type="InterPro" id="IPR014756">
    <property type="entry name" value="Ig_E-set"/>
</dbReference>
<dbReference type="InterPro" id="IPR002909">
    <property type="entry name" value="IPT_dom"/>
</dbReference>
<dbReference type="InterPro" id="IPR033926">
    <property type="entry name" value="IPT_NFkappaB"/>
</dbReference>
<dbReference type="InterPro" id="IPR000451">
    <property type="entry name" value="NFkB/Dor"/>
</dbReference>
<dbReference type="InterPro" id="IPR008967">
    <property type="entry name" value="p53-like_TF_DNA-bd_sf"/>
</dbReference>
<dbReference type="InterPro" id="IPR032397">
    <property type="entry name" value="RHD_dimer"/>
</dbReference>
<dbReference type="InterPro" id="IPR011539">
    <property type="entry name" value="RHD_DNA_bind_dom"/>
</dbReference>
<dbReference type="InterPro" id="IPR037059">
    <property type="entry name" value="RHD_DNA_bind_dom_sf"/>
</dbReference>
<dbReference type="PANTHER" id="PTHR24169:SF28">
    <property type="entry name" value="NUCLEAR FACTOR NF-KAPPA-B P110 SUBUNIT"/>
    <property type="match status" value="1"/>
</dbReference>
<dbReference type="PANTHER" id="PTHR24169">
    <property type="entry name" value="NUCLEAR FACTOR NF-KAPPA-B PROTEIN"/>
    <property type="match status" value="1"/>
</dbReference>
<dbReference type="Pfam" id="PF12796">
    <property type="entry name" value="Ank_2"/>
    <property type="match status" value="1"/>
</dbReference>
<dbReference type="Pfam" id="PF16179">
    <property type="entry name" value="RHD_dimer"/>
    <property type="match status" value="1"/>
</dbReference>
<dbReference type="Pfam" id="PF00554">
    <property type="entry name" value="RHD_DNA_bind"/>
    <property type="match status" value="1"/>
</dbReference>
<dbReference type="PRINTS" id="PR00057">
    <property type="entry name" value="NFKBTNSCPFCT"/>
</dbReference>
<dbReference type="SMART" id="SM00248">
    <property type="entry name" value="ANK"/>
    <property type="match status" value="6"/>
</dbReference>
<dbReference type="SMART" id="SM00429">
    <property type="entry name" value="IPT"/>
    <property type="match status" value="1"/>
</dbReference>
<dbReference type="SUPFAM" id="SSF48403">
    <property type="entry name" value="Ankyrin repeat"/>
    <property type="match status" value="1"/>
</dbReference>
<dbReference type="SUPFAM" id="SSF81296">
    <property type="entry name" value="E set domains"/>
    <property type="match status" value="1"/>
</dbReference>
<dbReference type="SUPFAM" id="SSF49417">
    <property type="entry name" value="p53-like transcription factors"/>
    <property type="match status" value="1"/>
</dbReference>
<dbReference type="PROSITE" id="PS50297">
    <property type="entry name" value="ANK_REP_REGION"/>
    <property type="match status" value="1"/>
</dbReference>
<dbReference type="PROSITE" id="PS50088">
    <property type="entry name" value="ANK_REPEAT"/>
    <property type="match status" value="2"/>
</dbReference>
<dbReference type="PROSITE" id="PS50254">
    <property type="entry name" value="REL_2"/>
    <property type="match status" value="1"/>
</dbReference>
<sequence>MNMNQYYDLDNGKNVMFMNDASSTSGYSSSTSPNSTNRSFSPAHSPKTMELQTDFANLNLPGGNSPHQPPMANSPYQNQLLNNGGICQLGATNLINSTGVSFGVANVTSFGNMYMDHQYFVPAPATVPPSQNFGYHQNGLASDGDIKHVPQLRIVEQPVEKFRFRYKSEMHGTHGSLNGANSKRTPKTFPEVTLCNYDGPAVIRCSLFQTNLDSPHSHQLVVRKDDRDVCDPHDLHVSKERGYVAQFINMGIIHTAKKYIFEELCKKKQDRLVFQMNRRELSHKQLQELHQETEREAKDMNLNQVRLCFEAFKIEDNGAWVPLAPPVYSNAINNRKSAQTGELRIVRLSKPTGGVMGNDELILLVEKVSKKNIKVRFFEEDEDGETVWEAYAKFRESDVHHQYAIVCQTPPYKDKDVDREVNVYIELIRPSDDERSFPALPFRYKPRSVIVSRKRRRTGSSANSSSSGTESSNNSLDLPKTLGLAQPPNGLPNLSQHDQTISEEFGREKHLNEFIASEDFRKLIEHNSSDLEKICQLDMGELQHDGHNRAEVPSHRNRTIKCLDDLFEIYKQDRISPIKISHHKVEKWFIEHALNNYNRDTLLHEVISHKKDKLKLAIQTIQVMNYFNLKDVVNSTLNADGDSALHVACQQDRAHYIRPLLGMGCNPNLKNNAGNTPLHVAVKEEHLSCVESFLNGVPTVQLDLSLTNDDGLTPLHMAIRQNKYDVAKKLISYDRTSISVANTMDGNNALHMAVLEQSVELLVLILDAQNENLTDILQAQNAAGHTPLELAERKANDRVVQLLKNVYPEKGELAMTWIPCKVKEEIDSSSDESSDAGQLEIKSEEMDIETKDEDSVELDLSSGPRRQKDESSRDTEMDNNKLQLLLKNKFIYDRLCSLLNQPLGHGSDPQDRKWMQLARQTHLKQFAFIWLGAEDLLDHVKRKGASVEFSTFARALQAVDPQAYALLVNPT</sequence>
<keyword id="KW-0010">Activator</keyword>
<keyword id="KW-0025">Alternative splicing</keyword>
<keyword id="KW-0040">ANK repeat</keyword>
<keyword id="KW-0051">Antiviral defense</keyword>
<keyword id="KW-0963">Cytoplasm</keyword>
<keyword id="KW-0903">Direct protein sequencing</keyword>
<keyword id="KW-0391">Immunity</keyword>
<keyword id="KW-0399">Innate immunity</keyword>
<keyword id="KW-0539">Nucleus</keyword>
<keyword id="KW-0597">Phosphoprotein</keyword>
<keyword id="KW-1185">Reference proteome</keyword>
<keyword id="KW-0677">Repeat</keyword>
<keyword id="KW-0804">Transcription</keyword>
<keyword id="KW-0805">Transcription regulation</keyword>